<comment type="function">
    <text evidence="4">Part of the twin-arginine translocation (Tat) system that transports large folded proteins containing a characteristic twin-arginine motif in their signal peptide across the thylakoid membrane. Involved in delta pH-dependent protein transport required for chloroplast development, especially thylakoid membrane formation. TATC and TATB mediate precursor recognition, whereas TATA facilitates translocation.</text>
</comment>
<comment type="subunit">
    <text evidence="4 5 6 7">In thylakoid membranes, TATC and TATB form a large receptor complex, containing about eight TATC-TATB pairs, which binds the precursor protein. Twin arginine signal peptide promotes pH-triggered docking of TATA oligomers to TATC-TATB receptor complex, inducing a conformational switch of TATA that results in activation of the translocase. TATA dissociates from TATC-TATB upon completion of translocation. According to PubMed:22564412, it is estimated that the translocase fully saturated with precursor proteins and TATA is an 2.2-megadalton complex that can individually transport eight precursor proteins or cooperatively transport multimeric precursors.</text>
</comment>
<comment type="subcellular location">
    <subcellularLocation>
        <location evidence="9 10">Plastid</location>
        <location evidence="9 10">Chloroplast thylakoid membrane</location>
        <topology evidence="9 10">Single-pass membrane protein</topology>
    </subcellularLocation>
    <text evidence="1">The C-terminus is located in the stroma.</text>
</comment>
<comment type="similarity">
    <text evidence="8">Belongs to the TatB family.</text>
</comment>
<sequence>MTPSLAIASSTSTMLLCPKLGTCSMSLSTCTPTSHSKIHHFHLYSLGKRLFTPWNGFKQLGFSTKPKKPLFHFIGKKGRCKGKVVYASLFGVGAPEALVIGVVALLVFGPKGLAEVARNLGKTLREFQPTIREIQDVSREFKSTLEREIGIDDITNPLQSTYSSNVRNTTPTPSATEITNNSQTAVDPNGKVDESKAYSSEEYLKITEEQLKAVAAQQQEQTSSPKEDEIEQQIQPPANETAATVPPPQKPESESSLPSDL</sequence>
<protein>
    <recommendedName>
        <fullName>Sec-independent protein translocase protein TATB, chloroplastic</fullName>
    </recommendedName>
    <alternativeName>
        <fullName>Protein HIGH CHLOROPHYLL FLUORESCENCE 106</fullName>
    </alternativeName>
    <alternativeName>
        <fullName>Protein TWIN-ARGININE TRANSLOCATION B</fullName>
    </alternativeName>
</protein>
<dbReference type="EMBL" id="AF284760">
    <property type="protein sequence ID" value="AAK93949.1"/>
    <property type="molecule type" value="mRNA"/>
</dbReference>
<dbReference type="EnsemblPlants" id="Psat6g193680.1">
    <property type="protein sequence ID" value="Psat6g193680.1.cds"/>
    <property type="gene ID" value="Psat6g193680"/>
</dbReference>
<dbReference type="Gramene" id="Psat6g193680.1">
    <property type="protein sequence ID" value="Psat6g193680.1.cds"/>
    <property type="gene ID" value="Psat6g193680"/>
</dbReference>
<dbReference type="GO" id="GO:0009535">
    <property type="term" value="C:chloroplast thylakoid membrane"/>
    <property type="evidence" value="ECO:0000314"/>
    <property type="project" value="UniProtKB"/>
</dbReference>
<dbReference type="GO" id="GO:0033281">
    <property type="term" value="C:TAT protein transport complex"/>
    <property type="evidence" value="ECO:0000314"/>
    <property type="project" value="UniProtKB"/>
</dbReference>
<dbReference type="GO" id="GO:0009977">
    <property type="term" value="F:proton motive force dependent protein transmembrane transporter activity"/>
    <property type="evidence" value="ECO:0000315"/>
    <property type="project" value="UniProtKB"/>
</dbReference>
<dbReference type="GO" id="GO:0045038">
    <property type="term" value="P:protein import into chloroplast thylakoid membrane"/>
    <property type="evidence" value="ECO:0000314"/>
    <property type="project" value="UniProtKB"/>
</dbReference>
<dbReference type="GO" id="GO:0043953">
    <property type="term" value="P:protein transport by the Tat complex"/>
    <property type="evidence" value="ECO:0000314"/>
    <property type="project" value="UniProtKB"/>
</dbReference>
<dbReference type="FunFam" id="1.20.5.3310:FF:000003">
    <property type="entry name" value="Sec-independent protein translocase protein TATB, chloroplastic"/>
    <property type="match status" value="1"/>
</dbReference>
<dbReference type="Gene3D" id="1.20.5.3310">
    <property type="match status" value="1"/>
</dbReference>
<dbReference type="InterPro" id="IPR003369">
    <property type="entry name" value="TatA/B/E"/>
</dbReference>
<dbReference type="InterPro" id="IPR006312">
    <property type="entry name" value="TatA/E"/>
</dbReference>
<dbReference type="NCBIfam" id="TIGR01411">
    <property type="entry name" value="tatAE"/>
    <property type="match status" value="1"/>
</dbReference>
<dbReference type="PANTHER" id="PTHR33162">
    <property type="entry name" value="SEC-INDEPENDENT PROTEIN TRANSLOCASE PROTEIN TATA, CHLOROPLASTIC"/>
    <property type="match status" value="1"/>
</dbReference>
<dbReference type="PANTHER" id="PTHR33162:SF3">
    <property type="entry name" value="SEC-INDEPENDENT PROTEIN TRANSLOCASE PROTEIN TATB, CHLOROPLASTIC"/>
    <property type="match status" value="1"/>
</dbReference>
<dbReference type="Pfam" id="PF02416">
    <property type="entry name" value="TatA_B_E"/>
    <property type="match status" value="1"/>
</dbReference>
<reference key="1">
    <citation type="journal article" date="2001" name="FEBS Lett.">
        <title>Chloroplast TatC plays a direct role in thylakoid (Delta)pH-dependent protein transport.</title>
        <authorList>
            <person name="Mori H."/>
            <person name="Summer E.J."/>
            <person name="Cline K."/>
        </authorList>
    </citation>
    <scope>NUCLEOTIDE SEQUENCE [MRNA]</scope>
</reference>
<reference key="2">
    <citation type="journal article" date="2001" name="J. Cell Biol.">
        <title>Thylakoid DeltapH-dependent precursor proteins bind to a cpTatC-Hcf106 complex before Tha4-dependent transport.</title>
        <authorList>
            <person name="Cline K."/>
            <person name="Mori H."/>
        </authorList>
    </citation>
    <scope>FUNCTION</scope>
    <scope>SUBUNIT</scope>
</reference>
<reference key="3">
    <citation type="journal article" date="2002" name="J. Cell Biol.">
        <title>A twin arginine signal peptide and the pH gradient trigger reversible assembly of the thylakoid [Delta]pH/Tat translocase.</title>
        <authorList>
            <person name="Mori H."/>
            <person name="Cline K."/>
        </authorList>
    </citation>
    <scope>SUBUNIT</scope>
</reference>
<reference key="4">
    <citation type="journal article" date="2003" name="Eur. J. Biochem.">
        <title>Functional assembly of thylakoid deltapH-dependent/Tat protein transport pathway components in vitro.</title>
        <authorList>
            <person name="Fincher V."/>
            <person name="Dabney-Smith C."/>
            <person name="Cline K."/>
        </authorList>
    </citation>
    <scope>SUBUNIT</scope>
    <scope>SUBCELLULAR LOCATION</scope>
    <scope>MUTAGENESIS OF GLU-96</scope>
</reference>
<reference key="5">
    <citation type="journal article" date="2009" name="FEBS Lett.">
        <title>Diffusion of a membrane protein, Tat subunit Hcf106, is highly restricted within the chloroplast thylakoid network.</title>
        <authorList>
            <person name="Vladimirou E."/>
            <person name="Li M."/>
            <person name="Aldridge C.P."/>
            <person name="Frigerio L."/>
            <person name="Kirkilionis M."/>
            <person name="Robinson C."/>
        </authorList>
    </citation>
    <scope>SUBCELLULAR LOCATION</scope>
</reference>
<reference key="6">
    <citation type="journal article" date="2012" name="J. Cell Biol.">
        <title>Stoichiometry for binding and transport by the twin arginine translocation system.</title>
        <authorList>
            <person name="Celedon J.M."/>
            <person name="Cline K."/>
        </authorList>
    </citation>
    <scope>SUBUNIT</scope>
</reference>
<accession>Q94G16</accession>
<proteinExistence type="evidence at protein level"/>
<gene>
    <name type="primary">TATB</name>
    <name type="synonym">HCF106</name>
</gene>
<feature type="transit peptide" description="Chloroplast" evidence="2">
    <location>
        <begin position="1"/>
        <end position="86"/>
    </location>
</feature>
<feature type="chain" id="PRO_0000419915" description="Sec-independent protein translocase protein TATB, chloroplastic">
    <location>
        <begin position="87"/>
        <end position="261"/>
    </location>
</feature>
<feature type="topological domain" description="Lumenal" evidence="2">
    <location>
        <begin position="87"/>
        <end position="88"/>
    </location>
</feature>
<feature type="transmembrane region" description="Helical" evidence="2">
    <location>
        <begin position="89"/>
        <end position="109"/>
    </location>
</feature>
<feature type="topological domain" description="Stromal" evidence="2">
    <location>
        <begin position="110"/>
        <end position="261"/>
    </location>
</feature>
<feature type="region of interest" description="Disordered" evidence="3">
    <location>
        <begin position="160"/>
        <end position="193"/>
    </location>
</feature>
<feature type="region of interest" description="Disordered" evidence="3">
    <location>
        <begin position="214"/>
        <end position="261"/>
    </location>
</feature>
<feature type="compositionally biased region" description="Polar residues" evidence="3">
    <location>
        <begin position="160"/>
        <end position="186"/>
    </location>
</feature>
<feature type="compositionally biased region" description="Polar residues" evidence="3">
    <location>
        <begin position="232"/>
        <end position="242"/>
    </location>
</feature>
<feature type="mutagenesis site" description="Loss of protein translocation." evidence="6">
    <original>E</original>
    <variation>Q</variation>
    <location>
        <position position="96"/>
    </location>
</feature>
<organism>
    <name type="scientific">Pisum sativum</name>
    <name type="common">Garden pea</name>
    <name type="synonym">Lathyrus oleraceus</name>
    <dbReference type="NCBI Taxonomy" id="3888"/>
    <lineage>
        <taxon>Eukaryota</taxon>
        <taxon>Viridiplantae</taxon>
        <taxon>Streptophyta</taxon>
        <taxon>Embryophyta</taxon>
        <taxon>Tracheophyta</taxon>
        <taxon>Spermatophyta</taxon>
        <taxon>Magnoliopsida</taxon>
        <taxon>eudicotyledons</taxon>
        <taxon>Gunneridae</taxon>
        <taxon>Pentapetalae</taxon>
        <taxon>rosids</taxon>
        <taxon>fabids</taxon>
        <taxon>Fabales</taxon>
        <taxon>Fabaceae</taxon>
        <taxon>Papilionoideae</taxon>
        <taxon>50 kb inversion clade</taxon>
        <taxon>NPAAA clade</taxon>
        <taxon>Hologalegina</taxon>
        <taxon>IRL clade</taxon>
        <taxon>Fabeae</taxon>
        <taxon>Pisum</taxon>
    </lineage>
</organism>
<evidence type="ECO:0000250" key="1"/>
<evidence type="ECO:0000255" key="2"/>
<evidence type="ECO:0000256" key="3">
    <source>
        <dbReference type="SAM" id="MobiDB-lite"/>
    </source>
</evidence>
<evidence type="ECO:0000269" key="4">
    <source>
    </source>
</evidence>
<evidence type="ECO:0000269" key="5">
    <source>
    </source>
</evidence>
<evidence type="ECO:0000269" key="6">
    <source>
    </source>
</evidence>
<evidence type="ECO:0000269" key="7">
    <source>
    </source>
</evidence>
<evidence type="ECO:0000305" key="8"/>
<evidence type="ECO:0000305" key="9">
    <source>
    </source>
</evidence>
<evidence type="ECO:0000305" key="10">
    <source>
    </source>
</evidence>
<keyword id="KW-0150">Chloroplast</keyword>
<keyword id="KW-0472">Membrane</keyword>
<keyword id="KW-0934">Plastid</keyword>
<keyword id="KW-0653">Protein transport</keyword>
<keyword id="KW-0793">Thylakoid</keyword>
<keyword id="KW-0809">Transit peptide</keyword>
<keyword id="KW-0811">Translocation</keyword>
<keyword id="KW-0812">Transmembrane</keyword>
<keyword id="KW-1133">Transmembrane helix</keyword>
<keyword id="KW-0813">Transport</keyword>
<name>TATB_PEA</name>